<accession>P9WPZ4</accession>
<accession>L0T542</accession>
<accession>O53870</accession>
<accession>Q7D954</accession>
<organism>
    <name type="scientific">Mycobacterium tuberculosis (strain CDC 1551 / Oshkosh)</name>
    <dbReference type="NCBI Taxonomy" id="83331"/>
    <lineage>
        <taxon>Bacteria</taxon>
        <taxon>Bacillati</taxon>
        <taxon>Actinomycetota</taxon>
        <taxon>Actinomycetes</taxon>
        <taxon>Mycobacteriales</taxon>
        <taxon>Mycobacteriaceae</taxon>
        <taxon>Mycobacterium</taxon>
        <taxon>Mycobacterium tuberculosis complex</taxon>
    </lineage>
</organism>
<name>DAPC_MYCTO</name>
<comment type="function">
    <text evidence="1">Involved in the lysine biosynthetic pathways. It catalyzes the transfer of an amino group from L-glutamate to N-succinyl-2-l-amino-6-oxoheptanedioate (N-succinyl-2-l-amino-6-ketopimelate) in a PLP-dependent reaction, yielding as products N-succinyl-l-2,6-diaminoheptanedioate (N-succinyl-diaminopimelate) and 2-oxoglutarate (By similarity).</text>
</comment>
<comment type="catalytic activity">
    <reaction>
        <text>N-succinyl-(2S,6S)-2,6-diaminopimelate + 2-oxoglutarate = (S)-2-succinylamino-6-oxoheptanedioate + L-glutamate</text>
        <dbReference type="Rhea" id="RHEA:11960"/>
        <dbReference type="ChEBI" id="CHEBI:15685"/>
        <dbReference type="ChEBI" id="CHEBI:16810"/>
        <dbReference type="ChEBI" id="CHEBI:29985"/>
        <dbReference type="ChEBI" id="CHEBI:58087"/>
        <dbReference type="EC" id="2.6.1.17"/>
    </reaction>
</comment>
<comment type="cofactor">
    <cofactor evidence="1">
        <name>pyridoxal 5'-phosphate</name>
        <dbReference type="ChEBI" id="CHEBI:597326"/>
    </cofactor>
    <text evidence="1">Binds 1 pyridoxal phosphate per subunit.</text>
</comment>
<comment type="pathway">
    <text>Amino-acid biosynthesis; L-lysine biosynthesis via DAP pathway; LL-2,6-diaminopimelate from (S)-tetrahydrodipicolinate (succinylase route): step 2/3.</text>
</comment>
<comment type="subunit">
    <text evidence="1">Homodimer.</text>
</comment>
<comment type="subcellular location">
    <subcellularLocation>
        <location evidence="1">Cytoplasm</location>
    </subcellularLocation>
</comment>
<comment type="similarity">
    <text evidence="2">Belongs to the class-III pyridoxal-phosphate-dependent aminotransferase family.</text>
</comment>
<protein>
    <recommendedName>
        <fullName>Probable N-succinyldiaminopimelate aminotransferase DapC</fullName>
    </recommendedName>
    <alternativeName>
        <fullName>DAP-AT</fullName>
        <ecNumber>2.6.1.17</ecNumber>
    </alternativeName>
</protein>
<keyword id="KW-0028">Amino-acid biosynthesis</keyword>
<keyword id="KW-0032">Aminotransferase</keyword>
<keyword id="KW-0963">Cytoplasm</keyword>
<keyword id="KW-0457">Lysine biosynthesis</keyword>
<keyword id="KW-0663">Pyridoxal phosphate</keyword>
<keyword id="KW-1185">Reference proteome</keyword>
<keyword id="KW-0808">Transferase</keyword>
<sequence length="397" mass="42209">MTVSRLRPYATTVFAEMSALATRIGAVNLGQGFPDEDGPPKMLQAAQDAIAGGVNQYPPGPGSAPLRRAIAAQRRRHFGVDYDPETEVLVTVGATEAIAAAVLGLVEPGSEVLLIEPFYDSYSPVVAMAGAHRVTVPLVPDGRGFALDADALRRAVTPRTRALIINSPHNPTGAVLSATELAAIAEIAVAANLVVITDEVYEHLVFDHARHLPLAGFDGMAERTITISSAAKMFNCTGWKIGWACGPAELIAGVRAAKQYLSYVGGAPFQPAVALALDTEDAWVAALRNSLRARRDRLAAGLTEIGFAVHDSYGTYFLCADPRPLGYDDSTEFCAALPEKVGVAAIPMSAFCDPAAGQASQQADVWNHLVRFTFCKRDDTLDEAIRRLSVLAERPAT</sequence>
<feature type="chain" id="PRO_0000426865" description="Probable N-succinyldiaminopimelate aminotransferase DapC">
    <location>
        <begin position="1"/>
        <end position="397"/>
    </location>
</feature>
<feature type="binding site" evidence="1">
    <location>
        <begin position="109"/>
        <end position="110"/>
    </location>
    <ligand>
        <name>pyridoxal 5'-phosphate</name>
        <dbReference type="ChEBI" id="CHEBI:597326"/>
    </ligand>
</feature>
<feature type="binding site" evidence="1">
    <location>
        <begin position="218"/>
        <end position="222"/>
    </location>
    <ligand>
        <name>pyridoxal 5'-phosphate</name>
        <dbReference type="ChEBI" id="CHEBI:597326"/>
    </ligand>
</feature>
<feature type="modified residue" description="N6-(pyridoxal phosphate)lysine">
    <location>
        <position position="232"/>
    </location>
</feature>
<gene>
    <name type="primary">dapC</name>
    <name type="ordered locus">MT0881</name>
</gene>
<proteinExistence type="evidence at protein level"/>
<evidence type="ECO:0000250" key="1"/>
<evidence type="ECO:0000305" key="2"/>
<reference key="1">
    <citation type="journal article" date="2002" name="J. Bacteriol.">
        <title>Whole-genome comparison of Mycobacterium tuberculosis clinical and laboratory strains.</title>
        <authorList>
            <person name="Fleischmann R.D."/>
            <person name="Alland D."/>
            <person name="Eisen J.A."/>
            <person name="Carpenter L."/>
            <person name="White O."/>
            <person name="Peterson J.D."/>
            <person name="DeBoy R.T."/>
            <person name="Dodson R.J."/>
            <person name="Gwinn M.L."/>
            <person name="Haft D.H."/>
            <person name="Hickey E.K."/>
            <person name="Kolonay J.F."/>
            <person name="Nelson W.C."/>
            <person name="Umayam L.A."/>
            <person name="Ermolaeva M.D."/>
            <person name="Salzberg S.L."/>
            <person name="Delcher A."/>
            <person name="Utterback T.R."/>
            <person name="Weidman J.F."/>
            <person name="Khouri H.M."/>
            <person name="Gill J."/>
            <person name="Mikula A."/>
            <person name="Bishai W."/>
            <person name="Jacobs W.R. Jr."/>
            <person name="Venter J.C."/>
            <person name="Fraser C.M."/>
        </authorList>
    </citation>
    <scope>NUCLEOTIDE SEQUENCE [LARGE SCALE GENOMIC DNA]</scope>
    <source>
        <strain>CDC 1551 / Oshkosh</strain>
    </source>
</reference>
<dbReference type="EC" id="2.6.1.17"/>
<dbReference type="EMBL" id="AE000516">
    <property type="protein sequence ID" value="AAK45122.1"/>
    <property type="molecule type" value="Genomic_DNA"/>
</dbReference>
<dbReference type="PIR" id="B70815">
    <property type="entry name" value="B70815"/>
</dbReference>
<dbReference type="RefSeq" id="WP_003404420.1">
    <property type="nucleotide sequence ID" value="NZ_KK341227.1"/>
</dbReference>
<dbReference type="SMR" id="P9WPZ4"/>
<dbReference type="KEGG" id="mtc:MT0881"/>
<dbReference type="PATRIC" id="fig|83331.31.peg.946"/>
<dbReference type="HOGENOM" id="CLU_017584_4_0_11"/>
<dbReference type="UniPathway" id="UPA00034">
    <property type="reaction ID" value="UER00020"/>
</dbReference>
<dbReference type="Proteomes" id="UP000001020">
    <property type="component" value="Chromosome"/>
</dbReference>
<dbReference type="GO" id="GO:0005737">
    <property type="term" value="C:cytoplasm"/>
    <property type="evidence" value="ECO:0007669"/>
    <property type="project" value="UniProtKB-SubCell"/>
</dbReference>
<dbReference type="GO" id="GO:0016212">
    <property type="term" value="F:kynurenine-oxoglutarate transaminase activity"/>
    <property type="evidence" value="ECO:0007669"/>
    <property type="project" value="TreeGrafter"/>
</dbReference>
<dbReference type="GO" id="GO:0030170">
    <property type="term" value="F:pyridoxal phosphate binding"/>
    <property type="evidence" value="ECO:0007669"/>
    <property type="project" value="InterPro"/>
</dbReference>
<dbReference type="GO" id="GO:0009016">
    <property type="term" value="F:succinyldiaminopimelate transaminase activity"/>
    <property type="evidence" value="ECO:0007669"/>
    <property type="project" value="UniProtKB-EC"/>
</dbReference>
<dbReference type="GO" id="GO:0009089">
    <property type="term" value="P:lysine biosynthetic process via diaminopimelate"/>
    <property type="evidence" value="ECO:0007669"/>
    <property type="project" value="UniProtKB-UniPathway"/>
</dbReference>
<dbReference type="CDD" id="cd00609">
    <property type="entry name" value="AAT_like"/>
    <property type="match status" value="1"/>
</dbReference>
<dbReference type="FunFam" id="3.40.640.10:FF:000076">
    <property type="entry name" value="N-succinyldiaminopimelate aminotransferase DapC"/>
    <property type="match status" value="1"/>
</dbReference>
<dbReference type="Gene3D" id="3.90.1150.10">
    <property type="entry name" value="Aspartate Aminotransferase, domain 1"/>
    <property type="match status" value="1"/>
</dbReference>
<dbReference type="Gene3D" id="3.40.640.10">
    <property type="entry name" value="Type I PLP-dependent aspartate aminotransferase-like (Major domain)"/>
    <property type="match status" value="1"/>
</dbReference>
<dbReference type="InterPro" id="IPR004839">
    <property type="entry name" value="Aminotransferase_I/II_large"/>
</dbReference>
<dbReference type="InterPro" id="IPR051326">
    <property type="entry name" value="Kynurenine-oxoglutarate_AT"/>
</dbReference>
<dbReference type="InterPro" id="IPR015424">
    <property type="entry name" value="PyrdxlP-dep_Trfase"/>
</dbReference>
<dbReference type="InterPro" id="IPR015421">
    <property type="entry name" value="PyrdxlP-dep_Trfase_major"/>
</dbReference>
<dbReference type="InterPro" id="IPR015422">
    <property type="entry name" value="PyrdxlP-dep_Trfase_small"/>
</dbReference>
<dbReference type="NCBIfam" id="NF005855">
    <property type="entry name" value="PRK07777.1"/>
    <property type="match status" value="1"/>
</dbReference>
<dbReference type="PANTHER" id="PTHR43807">
    <property type="entry name" value="FI04487P"/>
    <property type="match status" value="1"/>
</dbReference>
<dbReference type="PANTHER" id="PTHR43807:SF20">
    <property type="entry name" value="FI04487P"/>
    <property type="match status" value="1"/>
</dbReference>
<dbReference type="Pfam" id="PF00155">
    <property type="entry name" value="Aminotran_1_2"/>
    <property type="match status" value="1"/>
</dbReference>
<dbReference type="SUPFAM" id="SSF53383">
    <property type="entry name" value="PLP-dependent transferases"/>
    <property type="match status" value="1"/>
</dbReference>